<feature type="chain" id="PRO_1000099429" description="DNA repair protein RecO">
    <location>
        <begin position="1"/>
        <end position="242"/>
    </location>
</feature>
<proteinExistence type="inferred from homology"/>
<gene>
    <name evidence="1" type="primary">recO</name>
    <name type="ordered locus">Xaut_3886</name>
</gene>
<organism>
    <name type="scientific">Xanthobacter autotrophicus (strain ATCC BAA-1158 / Py2)</name>
    <dbReference type="NCBI Taxonomy" id="78245"/>
    <lineage>
        <taxon>Bacteria</taxon>
        <taxon>Pseudomonadati</taxon>
        <taxon>Pseudomonadota</taxon>
        <taxon>Alphaproteobacteria</taxon>
        <taxon>Hyphomicrobiales</taxon>
        <taxon>Xanthobacteraceae</taxon>
        <taxon>Xanthobacter</taxon>
    </lineage>
</organism>
<comment type="function">
    <text evidence="1">Involved in DNA repair and RecF pathway recombination.</text>
</comment>
<comment type="similarity">
    <text evidence="1">Belongs to the RecO family.</text>
</comment>
<dbReference type="EMBL" id="CP000781">
    <property type="protein sequence ID" value="ABS69110.1"/>
    <property type="molecule type" value="Genomic_DNA"/>
</dbReference>
<dbReference type="SMR" id="A7IM67"/>
<dbReference type="STRING" id="78245.Xaut_3886"/>
<dbReference type="KEGG" id="xau:Xaut_3886"/>
<dbReference type="eggNOG" id="COG1381">
    <property type="taxonomic scope" value="Bacteria"/>
</dbReference>
<dbReference type="HOGENOM" id="CLU_086029_0_0_5"/>
<dbReference type="OrthoDB" id="9804792at2"/>
<dbReference type="PhylomeDB" id="A7IM67"/>
<dbReference type="Proteomes" id="UP000002417">
    <property type="component" value="Chromosome"/>
</dbReference>
<dbReference type="GO" id="GO:0043590">
    <property type="term" value="C:bacterial nucleoid"/>
    <property type="evidence" value="ECO:0007669"/>
    <property type="project" value="TreeGrafter"/>
</dbReference>
<dbReference type="GO" id="GO:0006310">
    <property type="term" value="P:DNA recombination"/>
    <property type="evidence" value="ECO:0007669"/>
    <property type="project" value="UniProtKB-UniRule"/>
</dbReference>
<dbReference type="GO" id="GO:0006302">
    <property type="term" value="P:double-strand break repair"/>
    <property type="evidence" value="ECO:0007669"/>
    <property type="project" value="TreeGrafter"/>
</dbReference>
<dbReference type="Gene3D" id="2.40.50.140">
    <property type="entry name" value="Nucleic acid-binding proteins"/>
    <property type="match status" value="1"/>
</dbReference>
<dbReference type="Gene3D" id="1.20.1440.120">
    <property type="entry name" value="Recombination protein O, C-terminal domain"/>
    <property type="match status" value="1"/>
</dbReference>
<dbReference type="HAMAP" id="MF_00201">
    <property type="entry name" value="RecO"/>
    <property type="match status" value="1"/>
</dbReference>
<dbReference type="InterPro" id="IPR037278">
    <property type="entry name" value="ARFGAP/RecO"/>
</dbReference>
<dbReference type="InterPro" id="IPR022572">
    <property type="entry name" value="DNA_rep/recomb_RecO_N"/>
</dbReference>
<dbReference type="InterPro" id="IPR012340">
    <property type="entry name" value="NA-bd_OB-fold"/>
</dbReference>
<dbReference type="InterPro" id="IPR003717">
    <property type="entry name" value="RecO"/>
</dbReference>
<dbReference type="InterPro" id="IPR042242">
    <property type="entry name" value="RecO_C"/>
</dbReference>
<dbReference type="NCBIfam" id="TIGR00613">
    <property type="entry name" value="reco"/>
    <property type="match status" value="1"/>
</dbReference>
<dbReference type="PANTHER" id="PTHR33991">
    <property type="entry name" value="DNA REPAIR PROTEIN RECO"/>
    <property type="match status" value="1"/>
</dbReference>
<dbReference type="PANTHER" id="PTHR33991:SF1">
    <property type="entry name" value="DNA REPAIR PROTEIN RECO"/>
    <property type="match status" value="1"/>
</dbReference>
<dbReference type="Pfam" id="PF02565">
    <property type="entry name" value="RecO_C"/>
    <property type="match status" value="1"/>
</dbReference>
<dbReference type="Pfam" id="PF11967">
    <property type="entry name" value="RecO_N"/>
    <property type="match status" value="1"/>
</dbReference>
<dbReference type="SUPFAM" id="SSF57863">
    <property type="entry name" value="ArfGap/RecO-like zinc finger"/>
    <property type="match status" value="1"/>
</dbReference>
<dbReference type="SUPFAM" id="SSF50249">
    <property type="entry name" value="Nucleic acid-binding proteins"/>
    <property type="match status" value="1"/>
</dbReference>
<keyword id="KW-0227">DNA damage</keyword>
<keyword id="KW-0233">DNA recombination</keyword>
<keyword id="KW-0234">DNA repair</keyword>
<keyword id="KW-1185">Reference proteome</keyword>
<evidence type="ECO:0000255" key="1">
    <source>
        <dbReference type="HAMAP-Rule" id="MF_00201"/>
    </source>
</evidence>
<reference key="1">
    <citation type="submission" date="2007-07" db="EMBL/GenBank/DDBJ databases">
        <title>Complete sequence of chromosome of Xanthobacter autotrophicus Py2.</title>
        <authorList>
            <consortium name="US DOE Joint Genome Institute"/>
            <person name="Copeland A."/>
            <person name="Lucas S."/>
            <person name="Lapidus A."/>
            <person name="Barry K."/>
            <person name="Glavina del Rio T."/>
            <person name="Hammon N."/>
            <person name="Israni S."/>
            <person name="Dalin E."/>
            <person name="Tice H."/>
            <person name="Pitluck S."/>
            <person name="Sims D."/>
            <person name="Brettin T."/>
            <person name="Bruce D."/>
            <person name="Detter J.C."/>
            <person name="Han C."/>
            <person name="Tapia R."/>
            <person name="Brainard J."/>
            <person name="Schmutz J."/>
            <person name="Larimer F."/>
            <person name="Land M."/>
            <person name="Hauser L."/>
            <person name="Kyrpides N."/>
            <person name="Kim E."/>
            <person name="Ensigns S.A."/>
            <person name="Richardson P."/>
        </authorList>
    </citation>
    <scope>NUCLEOTIDE SEQUENCE [LARGE SCALE GENOMIC DNA]</scope>
    <source>
        <strain>ATCC BAA-1158 / Py2</strain>
    </source>
</reference>
<sequence>MEWTDEGIVLGVRRHGEGNAIVELLTRLRGRHLGMVRGGASRRQAPLLQPGNTVSATWRARLDEHMGNYALEPAVVRTEVLMRAPHAAFGFTHMAQILHLLPERDPHEGLFLTVGAILDAFENRESAGRLLARFELALLAELGFGLELETCAATGRREDLVYVSPKSGRAVCGEAGAPYADRLFALPRFLVDGTAPPAGDVEDALRLTGYFLLTRVLEPRGLGLSDARAAFISAWRRSIAPA</sequence>
<protein>
    <recommendedName>
        <fullName evidence="1">DNA repair protein RecO</fullName>
    </recommendedName>
    <alternativeName>
        <fullName evidence="1">Recombination protein O</fullName>
    </alternativeName>
</protein>
<accession>A7IM67</accession>
<name>RECO_XANP2</name>